<keyword id="KW-0067">ATP-binding</keyword>
<keyword id="KW-0315">Glutamine amidotransferase</keyword>
<keyword id="KW-0332">GMP biosynthesis</keyword>
<keyword id="KW-0436">Ligase</keyword>
<keyword id="KW-0547">Nucleotide-binding</keyword>
<keyword id="KW-0658">Purine biosynthesis</keyword>
<keyword id="KW-1185">Reference proteome</keyword>
<sequence>MEMAKEQEMILVLDFGSQYNQLITRRIREMGVYSELHDHEISIEEIKKMNPKGIILSGGPNSVYEEGSYTIDPEIYNLGVPVLGICYGMQLTTKLLGGKVERANEREYGKAIIHAKADELFFGLPEEQTVWMSHSDKVIEIPEGFESIADSPSTPYAAIEDKERRIYGVQFHPEVRHTEYGNDILRNFVRRICDCTGEWTMENFIDLEIEKIREQVGDRKVLCAMSGGVDSSVVAVLLHKAIGDQLTCIFVDHGLLRKGEGDMVMEQFGEGFNMNIIRVNAKDRFMDKLKGVSDPEQKRKIIGNEFVYVFDDEASKLEGVDFLAQGTLYTDVIESGTKTAQTIKSHHNVGGLPEDMQFELIEPINTLFKDEVRALGIELGIPEHLVWRQPFPGPGLGIRVLGEITEEKLEIVRESDAILREVIREEGLEREIWQYFTVLPGMRSVGVMGDYRTYDYTIGIRAVTSIDGMTSDFARIDWEVLQKISSRIVNEVDHVNRVVYDVTSKPPSTIEWE</sequence>
<proteinExistence type="inferred from homology"/>
<comment type="function">
    <text evidence="1">Catalyzes the synthesis of GMP from XMP.</text>
</comment>
<comment type="catalytic activity">
    <reaction evidence="1">
        <text>XMP + L-glutamine + ATP + H2O = GMP + L-glutamate + AMP + diphosphate + 2 H(+)</text>
        <dbReference type="Rhea" id="RHEA:11680"/>
        <dbReference type="ChEBI" id="CHEBI:15377"/>
        <dbReference type="ChEBI" id="CHEBI:15378"/>
        <dbReference type="ChEBI" id="CHEBI:29985"/>
        <dbReference type="ChEBI" id="CHEBI:30616"/>
        <dbReference type="ChEBI" id="CHEBI:33019"/>
        <dbReference type="ChEBI" id="CHEBI:57464"/>
        <dbReference type="ChEBI" id="CHEBI:58115"/>
        <dbReference type="ChEBI" id="CHEBI:58359"/>
        <dbReference type="ChEBI" id="CHEBI:456215"/>
        <dbReference type="EC" id="6.3.5.2"/>
    </reaction>
</comment>
<comment type="pathway">
    <text evidence="1">Purine metabolism; GMP biosynthesis; GMP from XMP (L-Gln route): step 1/1.</text>
</comment>
<comment type="subunit">
    <text evidence="1">Homodimer.</text>
</comment>
<accession>B9DLM7</accession>
<reference key="1">
    <citation type="journal article" date="2009" name="Appl. Environ. Microbiol.">
        <title>Genome analysis of the meat starter culture bacterium Staphylococcus carnosus TM300.</title>
        <authorList>
            <person name="Rosenstein R."/>
            <person name="Nerz C."/>
            <person name="Biswas L."/>
            <person name="Resch A."/>
            <person name="Raddatz G."/>
            <person name="Schuster S.C."/>
            <person name="Goetz F."/>
        </authorList>
    </citation>
    <scope>NUCLEOTIDE SEQUENCE [LARGE SCALE GENOMIC DNA]</scope>
    <source>
        <strain>TM300</strain>
    </source>
</reference>
<gene>
    <name evidence="1" type="primary">guaA</name>
    <name type="ordered locus">Sca_0050</name>
</gene>
<name>GUAA_STACT</name>
<evidence type="ECO:0000255" key="1">
    <source>
        <dbReference type="HAMAP-Rule" id="MF_00344"/>
    </source>
</evidence>
<feature type="chain" id="PRO_1000133381" description="GMP synthase [glutamine-hydrolyzing]">
    <location>
        <begin position="1"/>
        <end position="513"/>
    </location>
</feature>
<feature type="domain" description="Glutamine amidotransferase type-1" evidence="1">
    <location>
        <begin position="9"/>
        <end position="198"/>
    </location>
</feature>
<feature type="domain" description="GMPS ATP-PPase" evidence="1">
    <location>
        <begin position="199"/>
        <end position="388"/>
    </location>
</feature>
<feature type="active site" description="Nucleophile" evidence="1">
    <location>
        <position position="86"/>
    </location>
</feature>
<feature type="active site" evidence="1">
    <location>
        <position position="172"/>
    </location>
</feature>
<feature type="active site" evidence="1">
    <location>
        <position position="174"/>
    </location>
</feature>
<feature type="binding site" evidence="1">
    <location>
        <begin position="226"/>
        <end position="232"/>
    </location>
    <ligand>
        <name>ATP</name>
        <dbReference type="ChEBI" id="CHEBI:30616"/>
    </ligand>
</feature>
<dbReference type="EC" id="6.3.5.2" evidence="1"/>
<dbReference type="EMBL" id="AM295250">
    <property type="protein sequence ID" value="CAL26965.1"/>
    <property type="molecule type" value="Genomic_DNA"/>
</dbReference>
<dbReference type="RefSeq" id="WP_012664080.1">
    <property type="nucleotide sequence ID" value="NC_012121.1"/>
</dbReference>
<dbReference type="SMR" id="B9DLM7"/>
<dbReference type="MEROPS" id="C26.957"/>
<dbReference type="GeneID" id="93794963"/>
<dbReference type="KEGG" id="sca:SCA_0050"/>
<dbReference type="eggNOG" id="COG0518">
    <property type="taxonomic scope" value="Bacteria"/>
</dbReference>
<dbReference type="eggNOG" id="COG0519">
    <property type="taxonomic scope" value="Bacteria"/>
</dbReference>
<dbReference type="HOGENOM" id="CLU_014340_0_5_9"/>
<dbReference type="OrthoDB" id="9802219at2"/>
<dbReference type="BioCyc" id="SCAR396513:SCA_RS00240-MONOMER"/>
<dbReference type="UniPathway" id="UPA00189">
    <property type="reaction ID" value="UER00296"/>
</dbReference>
<dbReference type="Proteomes" id="UP000000444">
    <property type="component" value="Chromosome"/>
</dbReference>
<dbReference type="GO" id="GO:0005829">
    <property type="term" value="C:cytosol"/>
    <property type="evidence" value="ECO:0007669"/>
    <property type="project" value="TreeGrafter"/>
</dbReference>
<dbReference type="GO" id="GO:0005524">
    <property type="term" value="F:ATP binding"/>
    <property type="evidence" value="ECO:0007669"/>
    <property type="project" value="UniProtKB-UniRule"/>
</dbReference>
<dbReference type="GO" id="GO:0003921">
    <property type="term" value="F:GMP synthase activity"/>
    <property type="evidence" value="ECO:0007669"/>
    <property type="project" value="InterPro"/>
</dbReference>
<dbReference type="CDD" id="cd01742">
    <property type="entry name" value="GATase1_GMP_Synthase"/>
    <property type="match status" value="1"/>
</dbReference>
<dbReference type="CDD" id="cd01997">
    <property type="entry name" value="GMP_synthase_C"/>
    <property type="match status" value="1"/>
</dbReference>
<dbReference type="FunFam" id="3.30.300.10:FF:000002">
    <property type="entry name" value="GMP synthase [glutamine-hydrolyzing]"/>
    <property type="match status" value="1"/>
</dbReference>
<dbReference type="FunFam" id="3.40.50.620:FF:000001">
    <property type="entry name" value="GMP synthase [glutamine-hydrolyzing]"/>
    <property type="match status" value="1"/>
</dbReference>
<dbReference type="FunFam" id="3.40.50.880:FF:000001">
    <property type="entry name" value="GMP synthase [glutamine-hydrolyzing]"/>
    <property type="match status" value="1"/>
</dbReference>
<dbReference type="Gene3D" id="3.30.300.10">
    <property type="match status" value="1"/>
</dbReference>
<dbReference type="Gene3D" id="3.40.50.880">
    <property type="match status" value="1"/>
</dbReference>
<dbReference type="Gene3D" id="3.40.50.620">
    <property type="entry name" value="HUPs"/>
    <property type="match status" value="1"/>
</dbReference>
<dbReference type="HAMAP" id="MF_00344">
    <property type="entry name" value="GMP_synthase"/>
    <property type="match status" value="1"/>
</dbReference>
<dbReference type="InterPro" id="IPR029062">
    <property type="entry name" value="Class_I_gatase-like"/>
</dbReference>
<dbReference type="InterPro" id="IPR017926">
    <property type="entry name" value="GATASE"/>
</dbReference>
<dbReference type="InterPro" id="IPR001674">
    <property type="entry name" value="GMP_synth_C"/>
</dbReference>
<dbReference type="InterPro" id="IPR004739">
    <property type="entry name" value="GMP_synth_GATase"/>
</dbReference>
<dbReference type="InterPro" id="IPR022955">
    <property type="entry name" value="GMP_synthase"/>
</dbReference>
<dbReference type="InterPro" id="IPR025777">
    <property type="entry name" value="GMPS_ATP_PPase_dom"/>
</dbReference>
<dbReference type="InterPro" id="IPR014729">
    <property type="entry name" value="Rossmann-like_a/b/a_fold"/>
</dbReference>
<dbReference type="NCBIfam" id="TIGR00884">
    <property type="entry name" value="guaA_Cterm"/>
    <property type="match status" value="1"/>
</dbReference>
<dbReference type="NCBIfam" id="TIGR00888">
    <property type="entry name" value="guaA_Nterm"/>
    <property type="match status" value="1"/>
</dbReference>
<dbReference type="NCBIfam" id="NF000848">
    <property type="entry name" value="PRK00074.1"/>
    <property type="match status" value="1"/>
</dbReference>
<dbReference type="PANTHER" id="PTHR11922:SF2">
    <property type="entry name" value="GMP SYNTHASE [GLUTAMINE-HYDROLYZING]"/>
    <property type="match status" value="1"/>
</dbReference>
<dbReference type="PANTHER" id="PTHR11922">
    <property type="entry name" value="GMP SYNTHASE-RELATED"/>
    <property type="match status" value="1"/>
</dbReference>
<dbReference type="Pfam" id="PF00117">
    <property type="entry name" value="GATase"/>
    <property type="match status" value="1"/>
</dbReference>
<dbReference type="Pfam" id="PF00958">
    <property type="entry name" value="GMP_synt_C"/>
    <property type="match status" value="1"/>
</dbReference>
<dbReference type="Pfam" id="PF03054">
    <property type="entry name" value="tRNA_Me_trans"/>
    <property type="match status" value="1"/>
</dbReference>
<dbReference type="PRINTS" id="PR00097">
    <property type="entry name" value="ANTSNTHASEII"/>
</dbReference>
<dbReference type="PRINTS" id="PR00099">
    <property type="entry name" value="CPSGATASE"/>
</dbReference>
<dbReference type="PRINTS" id="PR00096">
    <property type="entry name" value="GATASE"/>
</dbReference>
<dbReference type="SUPFAM" id="SSF52402">
    <property type="entry name" value="Adenine nucleotide alpha hydrolases-like"/>
    <property type="match status" value="1"/>
</dbReference>
<dbReference type="SUPFAM" id="SSF52317">
    <property type="entry name" value="Class I glutamine amidotransferase-like"/>
    <property type="match status" value="1"/>
</dbReference>
<dbReference type="SUPFAM" id="SSF54810">
    <property type="entry name" value="GMP synthetase C-terminal dimerisation domain"/>
    <property type="match status" value="1"/>
</dbReference>
<dbReference type="PROSITE" id="PS51273">
    <property type="entry name" value="GATASE_TYPE_1"/>
    <property type="match status" value="1"/>
</dbReference>
<dbReference type="PROSITE" id="PS51553">
    <property type="entry name" value="GMPS_ATP_PPASE"/>
    <property type="match status" value="1"/>
</dbReference>
<organism>
    <name type="scientific">Staphylococcus carnosus (strain TM300)</name>
    <dbReference type="NCBI Taxonomy" id="396513"/>
    <lineage>
        <taxon>Bacteria</taxon>
        <taxon>Bacillati</taxon>
        <taxon>Bacillota</taxon>
        <taxon>Bacilli</taxon>
        <taxon>Bacillales</taxon>
        <taxon>Staphylococcaceae</taxon>
        <taxon>Staphylococcus</taxon>
    </lineage>
</organism>
<protein>
    <recommendedName>
        <fullName evidence="1">GMP synthase [glutamine-hydrolyzing]</fullName>
        <ecNumber evidence="1">6.3.5.2</ecNumber>
    </recommendedName>
    <alternativeName>
        <fullName evidence="1">GMP synthetase</fullName>
    </alternativeName>
    <alternativeName>
        <fullName evidence="1">Glutamine amidotransferase</fullName>
    </alternativeName>
</protein>